<comment type="function">
    <text evidence="1">Produces ATP from ADP in the presence of a proton gradient across the membrane. The gamma chain is believed to be important in regulating ATPase activity and the flow of protons through the CF(0) complex.</text>
</comment>
<comment type="subunit">
    <text evidence="1">F-type ATPases have 2 components, CF(1) - the catalytic core - and CF(0) - the membrane proton channel. CF(1) has five subunits: alpha(3), beta(3), gamma(1), delta(1), epsilon(1). CF(0) has three main subunits: a, b and c.</text>
</comment>
<comment type="subcellular location">
    <subcellularLocation>
        <location evidence="1">Cell membrane</location>
        <topology evidence="1">Peripheral membrane protein</topology>
    </subcellularLocation>
</comment>
<comment type="similarity">
    <text evidence="1">Belongs to the ATPase gamma chain family.</text>
</comment>
<reference key="1">
    <citation type="journal article" date="2005" name="J. Infect. Dis.">
        <title>Genome sequence of a serotype M28 strain of group A Streptococcus: potential new insights into puerperal sepsis and bacterial disease specificity.</title>
        <authorList>
            <person name="Green N.M."/>
            <person name="Zhang S."/>
            <person name="Porcella S.F."/>
            <person name="Nagiec M.J."/>
            <person name="Barbian K.D."/>
            <person name="Beres S.B."/>
            <person name="Lefebvre R.B."/>
            <person name="Musser J.M."/>
        </authorList>
    </citation>
    <scope>NUCLEOTIDE SEQUENCE [LARGE SCALE GENOMIC DNA]</scope>
    <source>
        <strain>MGAS6180</strain>
    </source>
</reference>
<evidence type="ECO:0000255" key="1">
    <source>
        <dbReference type="HAMAP-Rule" id="MF_00815"/>
    </source>
</evidence>
<proteinExistence type="inferred from homology"/>
<gene>
    <name evidence="1" type="primary">atpG</name>
    <name type="ordered locus">M28_Spy0558</name>
</gene>
<protein>
    <recommendedName>
        <fullName evidence="1">ATP synthase gamma chain</fullName>
    </recommendedName>
    <alternativeName>
        <fullName evidence="1">ATP synthase F1 sector gamma subunit</fullName>
    </alternativeName>
    <alternativeName>
        <fullName evidence="1">F-ATPase gamma subunit</fullName>
    </alternativeName>
</protein>
<keyword id="KW-0066">ATP synthesis</keyword>
<keyword id="KW-1003">Cell membrane</keyword>
<keyword id="KW-0139">CF(1)</keyword>
<keyword id="KW-0375">Hydrogen ion transport</keyword>
<keyword id="KW-0406">Ion transport</keyword>
<keyword id="KW-0472">Membrane</keyword>
<keyword id="KW-0813">Transport</keyword>
<organism>
    <name type="scientific">Streptococcus pyogenes serotype M28 (strain MGAS6180)</name>
    <dbReference type="NCBI Taxonomy" id="319701"/>
    <lineage>
        <taxon>Bacteria</taxon>
        <taxon>Bacillati</taxon>
        <taxon>Bacillota</taxon>
        <taxon>Bacilli</taxon>
        <taxon>Lactobacillales</taxon>
        <taxon>Streptococcaceae</taxon>
        <taxon>Streptococcus</taxon>
    </lineage>
</organism>
<feature type="chain" id="PRO_0000073391" description="ATP synthase gamma chain">
    <location>
        <begin position="1"/>
        <end position="291"/>
    </location>
</feature>
<name>ATPG_STRPM</name>
<sequence>MAGSLSEIKAKIISTEKTSKITSAMRMVSSAKLVKSEQAARDFQIYASKIRQITTDLLKSELTIGSDNPMLVSRPVKKTGYIVITSDKGLVGGYNSKILKSVMDMITEYHADGDYEIISIGSVGSDFFKARGMNVAFELRGLADQPSFEQVRQIISQSVDMFVNEIFDELYVCYNHHVNSLTSQVRVQQMLPISDLVADEAAEEGVTGFELEPNRHDILDQLLPQFTESLIYGAIIDAKTAEHAAGMTAMQTATDNAKNVINDLTIQYNRARQAAITQEITEIVAGANALE</sequence>
<accession>Q48UD4</accession>
<dbReference type="EMBL" id="CP000056">
    <property type="protein sequence ID" value="AAX71672.1"/>
    <property type="molecule type" value="Genomic_DNA"/>
</dbReference>
<dbReference type="RefSeq" id="WP_002985236.1">
    <property type="nucleotide sequence ID" value="NC_007296.2"/>
</dbReference>
<dbReference type="SMR" id="Q48UD4"/>
<dbReference type="KEGG" id="spb:M28_Spy0558"/>
<dbReference type="HOGENOM" id="CLU_050669_0_1_9"/>
<dbReference type="GO" id="GO:0005886">
    <property type="term" value="C:plasma membrane"/>
    <property type="evidence" value="ECO:0007669"/>
    <property type="project" value="UniProtKB-SubCell"/>
</dbReference>
<dbReference type="GO" id="GO:0045259">
    <property type="term" value="C:proton-transporting ATP synthase complex"/>
    <property type="evidence" value="ECO:0007669"/>
    <property type="project" value="UniProtKB-KW"/>
</dbReference>
<dbReference type="GO" id="GO:0005524">
    <property type="term" value="F:ATP binding"/>
    <property type="evidence" value="ECO:0007669"/>
    <property type="project" value="UniProtKB-UniRule"/>
</dbReference>
<dbReference type="GO" id="GO:0046933">
    <property type="term" value="F:proton-transporting ATP synthase activity, rotational mechanism"/>
    <property type="evidence" value="ECO:0007669"/>
    <property type="project" value="UniProtKB-UniRule"/>
</dbReference>
<dbReference type="GO" id="GO:0042777">
    <property type="term" value="P:proton motive force-driven plasma membrane ATP synthesis"/>
    <property type="evidence" value="ECO:0007669"/>
    <property type="project" value="UniProtKB-UniRule"/>
</dbReference>
<dbReference type="CDD" id="cd12151">
    <property type="entry name" value="F1-ATPase_gamma"/>
    <property type="match status" value="1"/>
</dbReference>
<dbReference type="FunFam" id="3.40.1380.10:FF:000002">
    <property type="entry name" value="ATP synthase gamma chain"/>
    <property type="match status" value="1"/>
</dbReference>
<dbReference type="Gene3D" id="3.40.1380.10">
    <property type="match status" value="1"/>
</dbReference>
<dbReference type="Gene3D" id="1.10.287.80">
    <property type="entry name" value="ATP synthase, gamma subunit, helix hairpin domain"/>
    <property type="match status" value="1"/>
</dbReference>
<dbReference type="HAMAP" id="MF_00815">
    <property type="entry name" value="ATP_synth_gamma_bact"/>
    <property type="match status" value="1"/>
</dbReference>
<dbReference type="InterPro" id="IPR035968">
    <property type="entry name" value="ATP_synth_F1_ATPase_gsu"/>
</dbReference>
<dbReference type="InterPro" id="IPR000131">
    <property type="entry name" value="ATP_synth_F1_gsu"/>
</dbReference>
<dbReference type="InterPro" id="IPR023632">
    <property type="entry name" value="ATP_synth_F1_gsu_CS"/>
</dbReference>
<dbReference type="NCBIfam" id="TIGR01146">
    <property type="entry name" value="ATPsyn_F1gamma"/>
    <property type="match status" value="1"/>
</dbReference>
<dbReference type="NCBIfam" id="NF004147">
    <property type="entry name" value="PRK05621.2-1"/>
    <property type="match status" value="1"/>
</dbReference>
<dbReference type="PANTHER" id="PTHR11693">
    <property type="entry name" value="ATP SYNTHASE GAMMA CHAIN"/>
    <property type="match status" value="1"/>
</dbReference>
<dbReference type="PANTHER" id="PTHR11693:SF22">
    <property type="entry name" value="ATP SYNTHASE SUBUNIT GAMMA, MITOCHONDRIAL"/>
    <property type="match status" value="1"/>
</dbReference>
<dbReference type="Pfam" id="PF00231">
    <property type="entry name" value="ATP-synt"/>
    <property type="match status" value="1"/>
</dbReference>
<dbReference type="PRINTS" id="PR00126">
    <property type="entry name" value="ATPASEGAMMA"/>
</dbReference>
<dbReference type="SUPFAM" id="SSF52943">
    <property type="entry name" value="ATP synthase (F1-ATPase), gamma subunit"/>
    <property type="match status" value="1"/>
</dbReference>
<dbReference type="PROSITE" id="PS00153">
    <property type="entry name" value="ATPASE_GAMMA"/>
    <property type="match status" value="1"/>
</dbReference>